<name>RS19_PYRCJ</name>
<accession>A3MTT6</accession>
<feature type="chain" id="PRO_0000354324" description="Small ribosomal subunit protein uS19">
    <location>
        <begin position="1"/>
        <end position="158"/>
    </location>
</feature>
<keyword id="KW-0002">3D-structure</keyword>
<keyword id="KW-0687">Ribonucleoprotein</keyword>
<keyword id="KW-0689">Ribosomal protein</keyword>
<keyword id="KW-0694">RNA-binding</keyword>
<keyword id="KW-0699">rRNA-binding</keyword>
<organism>
    <name type="scientific">Pyrobaculum calidifontis (strain DSM 21063 / JCM 11548 / VA1)</name>
    <dbReference type="NCBI Taxonomy" id="410359"/>
    <lineage>
        <taxon>Archaea</taxon>
        <taxon>Thermoproteota</taxon>
        <taxon>Thermoprotei</taxon>
        <taxon>Thermoproteales</taxon>
        <taxon>Thermoproteaceae</taxon>
        <taxon>Pyrobaculum</taxon>
    </lineage>
</organism>
<protein>
    <recommendedName>
        <fullName evidence="1">Small ribosomal subunit protein uS19</fullName>
    </recommendedName>
    <alternativeName>
        <fullName evidence="2">30S ribosomal protein S19</fullName>
    </alternativeName>
</protein>
<gene>
    <name evidence="1" type="primary">rps19</name>
    <name type="ordered locus">Pcal_0627</name>
</gene>
<evidence type="ECO:0000255" key="1">
    <source>
        <dbReference type="HAMAP-Rule" id="MF_00531"/>
    </source>
</evidence>
<evidence type="ECO:0000305" key="2"/>
<sequence length="158" mass="18147">MSSKEAEAQKGKQGWITPTVIPPEEWGSFRYRGKTLEELLNMPMDEFIKLLPARQRRSLKRGLKPEHRKLLEKIRKAKRLMAQGKKVTIKTHCRDMIILPEMVGLTIHVYNGITYIPVFISPWHIGHYLGEFALTTRIVQHGEPGLKATRSSLHIAAK</sequence>
<reference key="1">
    <citation type="submission" date="2007-02" db="EMBL/GenBank/DDBJ databases">
        <title>Complete sequence of Pyrobaculum calidifontis JCM 11548.</title>
        <authorList>
            <consortium name="US DOE Joint Genome Institute"/>
            <person name="Copeland A."/>
            <person name="Lucas S."/>
            <person name="Lapidus A."/>
            <person name="Barry K."/>
            <person name="Glavina del Rio T."/>
            <person name="Dalin E."/>
            <person name="Tice H."/>
            <person name="Pitluck S."/>
            <person name="Chain P."/>
            <person name="Malfatti S."/>
            <person name="Shin M."/>
            <person name="Vergez L."/>
            <person name="Schmutz J."/>
            <person name="Larimer F."/>
            <person name="Land M."/>
            <person name="Hauser L."/>
            <person name="Kyrpides N."/>
            <person name="Mikhailova N."/>
            <person name="Cozen A.E."/>
            <person name="Fitz-Gibbon S.T."/>
            <person name="House C.H."/>
            <person name="Saltikov C."/>
            <person name="Lowe T.M."/>
            <person name="Richardson P."/>
        </authorList>
    </citation>
    <scope>NUCLEOTIDE SEQUENCE [LARGE SCALE GENOMIC DNA]</scope>
    <source>
        <strain>DSM 21063 / JCM 11548 / VA1</strain>
    </source>
</reference>
<dbReference type="EMBL" id="CP000561">
    <property type="protein sequence ID" value="ABO08053.1"/>
    <property type="molecule type" value="Genomic_DNA"/>
</dbReference>
<dbReference type="RefSeq" id="WP_011849311.1">
    <property type="nucleotide sequence ID" value="NC_009073.1"/>
</dbReference>
<dbReference type="PDB" id="9E71">
    <property type="method" value="EM"/>
    <property type="resolution" value="2.36 A"/>
    <property type="chains" value="BT=1-158"/>
</dbReference>
<dbReference type="PDB" id="9E7F">
    <property type="method" value="EM"/>
    <property type="resolution" value="2.53 A"/>
    <property type="chains" value="BT=1-158"/>
</dbReference>
<dbReference type="PDBsum" id="9E71"/>
<dbReference type="PDBsum" id="9E7F"/>
<dbReference type="EMDB" id="EMD-47628"/>
<dbReference type="SMR" id="A3MTT6"/>
<dbReference type="STRING" id="410359.Pcal_0627"/>
<dbReference type="GeneID" id="4910031"/>
<dbReference type="KEGG" id="pcl:Pcal_0627"/>
<dbReference type="eggNOG" id="arCOG04099">
    <property type="taxonomic scope" value="Archaea"/>
</dbReference>
<dbReference type="HOGENOM" id="CLU_097347_1_1_2"/>
<dbReference type="OrthoDB" id="30559at2157"/>
<dbReference type="Proteomes" id="UP000001431">
    <property type="component" value="Chromosome"/>
</dbReference>
<dbReference type="GO" id="GO:0022627">
    <property type="term" value="C:cytosolic small ribosomal subunit"/>
    <property type="evidence" value="ECO:0007669"/>
    <property type="project" value="TreeGrafter"/>
</dbReference>
<dbReference type="GO" id="GO:0019843">
    <property type="term" value="F:rRNA binding"/>
    <property type="evidence" value="ECO:0007669"/>
    <property type="project" value="UniProtKB-UniRule"/>
</dbReference>
<dbReference type="GO" id="GO:0003735">
    <property type="term" value="F:structural constituent of ribosome"/>
    <property type="evidence" value="ECO:0007669"/>
    <property type="project" value="InterPro"/>
</dbReference>
<dbReference type="GO" id="GO:0000028">
    <property type="term" value="P:ribosomal small subunit assembly"/>
    <property type="evidence" value="ECO:0007669"/>
    <property type="project" value="TreeGrafter"/>
</dbReference>
<dbReference type="GO" id="GO:0006412">
    <property type="term" value="P:translation"/>
    <property type="evidence" value="ECO:0007669"/>
    <property type="project" value="UniProtKB-UniRule"/>
</dbReference>
<dbReference type="FunFam" id="3.30.860.10:FF:000002">
    <property type="entry name" value="40S ribosomal protein S15"/>
    <property type="match status" value="1"/>
</dbReference>
<dbReference type="Gene3D" id="3.30.860.10">
    <property type="entry name" value="30s Ribosomal Protein S19, Chain A"/>
    <property type="match status" value="1"/>
</dbReference>
<dbReference type="HAMAP" id="MF_00531">
    <property type="entry name" value="Ribosomal_uS19"/>
    <property type="match status" value="1"/>
</dbReference>
<dbReference type="InterPro" id="IPR002222">
    <property type="entry name" value="Ribosomal_uS19"/>
</dbReference>
<dbReference type="InterPro" id="IPR020934">
    <property type="entry name" value="Ribosomal_uS19_CS"/>
</dbReference>
<dbReference type="InterPro" id="IPR005713">
    <property type="entry name" value="Ribosomal_uS19_euk/arc"/>
</dbReference>
<dbReference type="InterPro" id="IPR023575">
    <property type="entry name" value="Ribosomal_uS19_SF"/>
</dbReference>
<dbReference type="NCBIfam" id="NF003121">
    <property type="entry name" value="PRK04038.1"/>
    <property type="match status" value="1"/>
</dbReference>
<dbReference type="NCBIfam" id="TIGR01025">
    <property type="entry name" value="uS19_arch"/>
    <property type="match status" value="1"/>
</dbReference>
<dbReference type="PANTHER" id="PTHR11880">
    <property type="entry name" value="RIBOSOMAL PROTEIN S19P FAMILY MEMBER"/>
    <property type="match status" value="1"/>
</dbReference>
<dbReference type="PANTHER" id="PTHR11880:SF2">
    <property type="entry name" value="SMALL RIBOSOMAL SUBUNIT PROTEIN US19"/>
    <property type="match status" value="1"/>
</dbReference>
<dbReference type="Pfam" id="PF00203">
    <property type="entry name" value="Ribosomal_S19"/>
    <property type="match status" value="1"/>
</dbReference>
<dbReference type="PIRSF" id="PIRSF002144">
    <property type="entry name" value="Ribosomal_S19"/>
    <property type="match status" value="1"/>
</dbReference>
<dbReference type="PRINTS" id="PR00975">
    <property type="entry name" value="RIBOSOMALS19"/>
</dbReference>
<dbReference type="SUPFAM" id="SSF54570">
    <property type="entry name" value="Ribosomal protein S19"/>
    <property type="match status" value="1"/>
</dbReference>
<dbReference type="PROSITE" id="PS00323">
    <property type="entry name" value="RIBOSOMAL_S19"/>
    <property type="match status" value="1"/>
</dbReference>
<comment type="function">
    <text evidence="1">Protein S19 forms a complex with S13 that binds strongly to the 16S ribosomal RNA.</text>
</comment>
<comment type="similarity">
    <text evidence="1">Belongs to the universal ribosomal protein uS19 family.</text>
</comment>
<proteinExistence type="evidence at protein level"/>